<organism>
    <name type="scientific">Latilactobacillus sakei subsp. sakei (strain 23K)</name>
    <name type="common">Lactobacillus sakei subsp. sakei</name>
    <dbReference type="NCBI Taxonomy" id="314315"/>
    <lineage>
        <taxon>Bacteria</taxon>
        <taxon>Bacillati</taxon>
        <taxon>Bacillota</taxon>
        <taxon>Bacilli</taxon>
        <taxon>Lactobacillales</taxon>
        <taxon>Lactobacillaceae</taxon>
        <taxon>Latilactobacillus</taxon>
    </lineage>
</organism>
<feature type="chain" id="PRO_0000273665" description="Exodeoxyribonuclease 7 large subunit">
    <location>
        <begin position="1"/>
        <end position="449"/>
    </location>
</feature>
<gene>
    <name evidence="1" type="primary">xseA</name>
    <name type="ordered locus">LCA_0677</name>
</gene>
<accession>Q38XU8</accession>
<protein>
    <recommendedName>
        <fullName evidence="1">Exodeoxyribonuclease 7 large subunit</fullName>
        <ecNumber evidence="1">3.1.11.6</ecNumber>
    </recommendedName>
    <alternativeName>
        <fullName evidence="1">Exodeoxyribonuclease VII large subunit</fullName>
        <shortName evidence="1">Exonuclease VII large subunit</shortName>
    </alternativeName>
</protein>
<keyword id="KW-0963">Cytoplasm</keyword>
<keyword id="KW-0269">Exonuclease</keyword>
<keyword id="KW-0378">Hydrolase</keyword>
<keyword id="KW-0540">Nuclease</keyword>
<keyword id="KW-1185">Reference proteome</keyword>
<name>EX7L_LATSS</name>
<comment type="function">
    <text evidence="1">Bidirectionally degrades single-stranded DNA into large acid-insoluble oligonucleotides, which are then degraded further into small acid-soluble oligonucleotides.</text>
</comment>
<comment type="catalytic activity">
    <reaction evidence="1">
        <text>Exonucleolytic cleavage in either 5'- to 3'- or 3'- to 5'-direction to yield nucleoside 5'-phosphates.</text>
        <dbReference type="EC" id="3.1.11.6"/>
    </reaction>
</comment>
<comment type="subunit">
    <text evidence="1">Heterooligomer composed of large and small subunits.</text>
</comment>
<comment type="subcellular location">
    <subcellularLocation>
        <location evidence="1">Cytoplasm</location>
    </subcellularLocation>
</comment>
<comment type="similarity">
    <text evidence="1">Belongs to the XseA family.</text>
</comment>
<evidence type="ECO:0000255" key="1">
    <source>
        <dbReference type="HAMAP-Rule" id="MF_00378"/>
    </source>
</evidence>
<sequence length="449" mass="50698">MVKPTDYLTVTALTQYLKAKFERDPYLDRVYLTGEISNFRLRPNAHQYFSLKDNKAKISAIMFKSAFEKVKFTPEEGMKVLIVGRISLYEASGNYQIYVERMEPDGLGALYQAYEQLKAKLATEGLFDAPKQPLVRFPKRIAVITSPSGAVIRDIITTTQRRYPIAQLVLFPAVVQGDGAADVLVERLKQVNEHGDFDTIIIGRGGGSIEDLWPFNEERVARAIVASQIPVISSVGHETDTTIADLVADVRAATPTAAAELATPVLTDEILKLQQQRLRLYQAFSKTVALNKKQLDHLQNSYVLKQPKRLYDGYLQNVDQLQRRLLTAQQQLLKDRRQQVQLLQQRLMAQSPLMAVRQAQKDVTEQQRRLNQAMNRLMADRRQKAAQVIAALDLVSPLKILGRGFAYVTDDQQQMLKKVADFKTQQPIELHVQDGLVTAEVVATHKGEE</sequence>
<dbReference type="EC" id="3.1.11.6" evidence="1"/>
<dbReference type="EMBL" id="CR936503">
    <property type="protein sequence ID" value="CAI54981.1"/>
    <property type="molecule type" value="Genomic_DNA"/>
</dbReference>
<dbReference type="RefSeq" id="WP_011374386.1">
    <property type="nucleotide sequence ID" value="NC_007576.1"/>
</dbReference>
<dbReference type="SMR" id="Q38XU8"/>
<dbReference type="STRING" id="314315.LCA_0677"/>
<dbReference type="KEGG" id="lsa:LCA_0677"/>
<dbReference type="eggNOG" id="COG1570">
    <property type="taxonomic scope" value="Bacteria"/>
</dbReference>
<dbReference type="HOGENOM" id="CLU_023625_3_1_9"/>
<dbReference type="OrthoDB" id="9802795at2"/>
<dbReference type="Proteomes" id="UP000002707">
    <property type="component" value="Chromosome"/>
</dbReference>
<dbReference type="GO" id="GO:0005737">
    <property type="term" value="C:cytoplasm"/>
    <property type="evidence" value="ECO:0007669"/>
    <property type="project" value="UniProtKB-SubCell"/>
</dbReference>
<dbReference type="GO" id="GO:0009318">
    <property type="term" value="C:exodeoxyribonuclease VII complex"/>
    <property type="evidence" value="ECO:0007669"/>
    <property type="project" value="InterPro"/>
</dbReference>
<dbReference type="GO" id="GO:0008855">
    <property type="term" value="F:exodeoxyribonuclease VII activity"/>
    <property type="evidence" value="ECO:0007669"/>
    <property type="project" value="UniProtKB-UniRule"/>
</dbReference>
<dbReference type="GO" id="GO:0003676">
    <property type="term" value="F:nucleic acid binding"/>
    <property type="evidence" value="ECO:0007669"/>
    <property type="project" value="InterPro"/>
</dbReference>
<dbReference type="GO" id="GO:0006308">
    <property type="term" value="P:DNA catabolic process"/>
    <property type="evidence" value="ECO:0007669"/>
    <property type="project" value="UniProtKB-UniRule"/>
</dbReference>
<dbReference type="CDD" id="cd04489">
    <property type="entry name" value="ExoVII_LU_OBF"/>
    <property type="match status" value="1"/>
</dbReference>
<dbReference type="HAMAP" id="MF_00378">
    <property type="entry name" value="Exonuc_7_L"/>
    <property type="match status" value="1"/>
</dbReference>
<dbReference type="InterPro" id="IPR003753">
    <property type="entry name" value="Exonuc_VII_L"/>
</dbReference>
<dbReference type="InterPro" id="IPR020579">
    <property type="entry name" value="Exonuc_VII_lsu_C"/>
</dbReference>
<dbReference type="InterPro" id="IPR025824">
    <property type="entry name" value="OB-fold_nuc-bd_dom"/>
</dbReference>
<dbReference type="NCBIfam" id="TIGR00237">
    <property type="entry name" value="xseA"/>
    <property type="match status" value="1"/>
</dbReference>
<dbReference type="PANTHER" id="PTHR30008">
    <property type="entry name" value="EXODEOXYRIBONUCLEASE 7 LARGE SUBUNIT"/>
    <property type="match status" value="1"/>
</dbReference>
<dbReference type="PANTHER" id="PTHR30008:SF0">
    <property type="entry name" value="EXODEOXYRIBONUCLEASE 7 LARGE SUBUNIT"/>
    <property type="match status" value="1"/>
</dbReference>
<dbReference type="Pfam" id="PF02601">
    <property type="entry name" value="Exonuc_VII_L"/>
    <property type="match status" value="1"/>
</dbReference>
<dbReference type="Pfam" id="PF13742">
    <property type="entry name" value="tRNA_anti_2"/>
    <property type="match status" value="1"/>
</dbReference>
<reference key="1">
    <citation type="journal article" date="2005" name="Nat. Biotechnol.">
        <title>The complete genome sequence of the meat-borne lactic acid bacterium Lactobacillus sakei 23K.</title>
        <authorList>
            <person name="Chaillou S."/>
            <person name="Champomier-Verges M.-C."/>
            <person name="Cornet M."/>
            <person name="Crutz-Le Coq A.-M."/>
            <person name="Dudez A.-M."/>
            <person name="Martin V."/>
            <person name="Beaufils S."/>
            <person name="Darbon-Rongere E."/>
            <person name="Bossy R."/>
            <person name="Loux V."/>
            <person name="Zagorec M."/>
        </authorList>
    </citation>
    <scope>NUCLEOTIDE SEQUENCE [LARGE SCALE GENOMIC DNA]</scope>
    <source>
        <strain>23K</strain>
    </source>
</reference>
<proteinExistence type="inferred from homology"/>